<protein>
    <recommendedName>
        <fullName>Protein YIP5</fullName>
    </recommendedName>
    <alternativeName>
        <fullName>YPT-interacting protein 5</fullName>
    </alternativeName>
</protein>
<gene>
    <name evidence="1" type="primary">yip5</name>
    <name type="ORF">SPAC227.06</name>
</gene>
<organism>
    <name type="scientific">Schizosaccharomyces pombe (strain 972 / ATCC 24843)</name>
    <name type="common">Fission yeast</name>
    <dbReference type="NCBI Taxonomy" id="284812"/>
    <lineage>
        <taxon>Eukaryota</taxon>
        <taxon>Fungi</taxon>
        <taxon>Dikarya</taxon>
        <taxon>Ascomycota</taxon>
        <taxon>Taphrinomycotina</taxon>
        <taxon>Schizosaccharomycetes</taxon>
        <taxon>Schizosaccharomycetales</taxon>
        <taxon>Schizosaccharomycetaceae</taxon>
        <taxon>Schizosaccharomyces</taxon>
    </lineage>
</organism>
<accession>Q9UTD3</accession>
<comment type="function">
    <text evidence="1">Possible role in vesicle-mediated transport. May be involved in proper membrane localization of Rab GTPases (By similarity).</text>
</comment>
<comment type="subunit">
    <text evidence="1">Interacts with the YIP1 family members yip1 and yip4, and several Rab GTPases. The C-terminal cysteines in the Rab GTPase ypt2 are essential for the interaction. Interacts with snx3 (By similarity).</text>
</comment>
<comment type="subcellular location">
    <subcellularLocation>
        <location evidence="2">Membrane</location>
        <topology evidence="2">Multi-pass membrane protein</topology>
    </subcellularLocation>
</comment>
<comment type="similarity">
    <text evidence="2">Belongs to the YIP1 family.</text>
</comment>
<name>YIP5_SCHPO</name>
<evidence type="ECO:0000250" key="1">
    <source>
        <dbReference type="UniProtKB" id="P53108"/>
    </source>
</evidence>
<evidence type="ECO:0000255" key="2"/>
<feature type="chain" id="PRO_0000259417" description="Protein YIP5">
    <location>
        <begin position="1"/>
        <end position="249"/>
    </location>
</feature>
<feature type="transmembrane region" description="Helical" evidence="2">
    <location>
        <begin position="87"/>
        <end position="107"/>
    </location>
</feature>
<feature type="transmembrane region" description="Helical" evidence="2">
    <location>
        <begin position="131"/>
        <end position="151"/>
    </location>
</feature>
<feature type="transmembrane region" description="Helical" evidence="2">
    <location>
        <begin position="164"/>
        <end position="184"/>
    </location>
</feature>
<feature type="transmembrane region" description="Helical" evidence="2">
    <location>
        <begin position="188"/>
        <end position="208"/>
    </location>
</feature>
<feature type="transmembrane region" description="Helical" evidence="2">
    <location>
        <begin position="228"/>
        <end position="248"/>
    </location>
</feature>
<dbReference type="EMBL" id="CU329670">
    <property type="protein sequence ID" value="CAB61455.1"/>
    <property type="molecule type" value="Genomic_DNA"/>
</dbReference>
<dbReference type="PIR" id="T50162">
    <property type="entry name" value="T50162"/>
</dbReference>
<dbReference type="RefSeq" id="NP_592960.1">
    <property type="nucleotide sequence ID" value="NM_001018360.2"/>
</dbReference>
<dbReference type="BioGRID" id="277931">
    <property type="interactions" value="32"/>
</dbReference>
<dbReference type="FunCoup" id="Q9UTD3">
    <property type="interactions" value="285"/>
</dbReference>
<dbReference type="IntAct" id="Q9UTD3">
    <property type="interactions" value="1"/>
</dbReference>
<dbReference type="STRING" id="284812.Q9UTD3"/>
<dbReference type="iPTMnet" id="Q9UTD3"/>
<dbReference type="PaxDb" id="4896-SPAC227.06.1"/>
<dbReference type="EnsemblFungi" id="SPAC227.06.1">
    <property type="protein sequence ID" value="SPAC227.06.1:pep"/>
    <property type="gene ID" value="SPAC227.06"/>
</dbReference>
<dbReference type="GeneID" id="2541426"/>
<dbReference type="KEGG" id="spo:2541426"/>
<dbReference type="PomBase" id="SPAC227.06">
    <property type="gene designation" value="yip5"/>
</dbReference>
<dbReference type="VEuPathDB" id="FungiDB:SPAC227.06"/>
<dbReference type="eggNOG" id="KOG3114">
    <property type="taxonomic scope" value="Eukaryota"/>
</dbReference>
<dbReference type="HOGENOM" id="CLU_059606_2_1_1"/>
<dbReference type="InParanoid" id="Q9UTD3"/>
<dbReference type="OMA" id="VFRRCVA"/>
<dbReference type="PhylomeDB" id="Q9UTD3"/>
<dbReference type="PRO" id="PR:Q9UTD3"/>
<dbReference type="Proteomes" id="UP000002485">
    <property type="component" value="Chromosome I"/>
</dbReference>
<dbReference type="GO" id="GO:0005783">
    <property type="term" value="C:endoplasmic reticulum"/>
    <property type="evidence" value="ECO:0007005"/>
    <property type="project" value="PomBase"/>
</dbReference>
<dbReference type="GO" id="GO:0005794">
    <property type="term" value="C:Golgi apparatus"/>
    <property type="evidence" value="ECO:0000318"/>
    <property type="project" value="GO_Central"/>
</dbReference>
<dbReference type="GO" id="GO:0016020">
    <property type="term" value="C:membrane"/>
    <property type="evidence" value="ECO:0007669"/>
    <property type="project" value="UniProtKB-SubCell"/>
</dbReference>
<dbReference type="GO" id="GO:0031267">
    <property type="term" value="F:small GTPase binding"/>
    <property type="evidence" value="ECO:0000266"/>
    <property type="project" value="PomBase"/>
</dbReference>
<dbReference type="GO" id="GO:0016192">
    <property type="term" value="P:vesicle-mediated transport"/>
    <property type="evidence" value="ECO:0000266"/>
    <property type="project" value="PomBase"/>
</dbReference>
<dbReference type="InterPro" id="IPR006977">
    <property type="entry name" value="Yip1_dom"/>
</dbReference>
<dbReference type="InterPro" id="IPR039765">
    <property type="entry name" value="Yip5/YIPF1/YIPF2"/>
</dbReference>
<dbReference type="PANTHER" id="PTHR12822">
    <property type="entry name" value="PROTEIN YIPF"/>
    <property type="match status" value="1"/>
</dbReference>
<dbReference type="PANTHER" id="PTHR12822:SF2">
    <property type="entry name" value="PROTEIN YIPF"/>
    <property type="match status" value="1"/>
</dbReference>
<dbReference type="Pfam" id="PF04893">
    <property type="entry name" value="Yip1"/>
    <property type="match status" value="1"/>
</dbReference>
<proteinExistence type="inferred from homology"/>
<keyword id="KW-0472">Membrane</keyword>
<keyword id="KW-1185">Reference proteome</keyword>
<keyword id="KW-0812">Transmembrane</keyword>
<keyword id="KW-1133">Transmembrane helix</keyword>
<reference key="1">
    <citation type="journal article" date="2002" name="Nature">
        <title>The genome sequence of Schizosaccharomyces pombe.</title>
        <authorList>
            <person name="Wood V."/>
            <person name="Gwilliam R."/>
            <person name="Rajandream M.A."/>
            <person name="Lyne M.H."/>
            <person name="Lyne R."/>
            <person name="Stewart A."/>
            <person name="Sgouros J.G."/>
            <person name="Peat N."/>
            <person name="Hayles J."/>
            <person name="Baker S.G."/>
            <person name="Basham D."/>
            <person name="Bowman S."/>
            <person name="Brooks K."/>
            <person name="Brown D."/>
            <person name="Brown S."/>
            <person name="Chillingworth T."/>
            <person name="Churcher C.M."/>
            <person name="Collins M."/>
            <person name="Connor R."/>
            <person name="Cronin A."/>
            <person name="Davis P."/>
            <person name="Feltwell T."/>
            <person name="Fraser A."/>
            <person name="Gentles S."/>
            <person name="Goble A."/>
            <person name="Hamlin N."/>
            <person name="Harris D.E."/>
            <person name="Hidalgo J."/>
            <person name="Hodgson G."/>
            <person name="Holroyd S."/>
            <person name="Hornsby T."/>
            <person name="Howarth S."/>
            <person name="Huckle E.J."/>
            <person name="Hunt S."/>
            <person name="Jagels K."/>
            <person name="James K.D."/>
            <person name="Jones L."/>
            <person name="Jones M."/>
            <person name="Leather S."/>
            <person name="McDonald S."/>
            <person name="McLean J."/>
            <person name="Mooney P."/>
            <person name="Moule S."/>
            <person name="Mungall K.L."/>
            <person name="Murphy L.D."/>
            <person name="Niblett D."/>
            <person name="Odell C."/>
            <person name="Oliver K."/>
            <person name="O'Neil S."/>
            <person name="Pearson D."/>
            <person name="Quail M.A."/>
            <person name="Rabbinowitsch E."/>
            <person name="Rutherford K.M."/>
            <person name="Rutter S."/>
            <person name="Saunders D."/>
            <person name="Seeger K."/>
            <person name="Sharp S."/>
            <person name="Skelton J."/>
            <person name="Simmonds M.N."/>
            <person name="Squares R."/>
            <person name="Squares S."/>
            <person name="Stevens K."/>
            <person name="Taylor K."/>
            <person name="Taylor R.G."/>
            <person name="Tivey A."/>
            <person name="Walsh S.V."/>
            <person name="Warren T."/>
            <person name="Whitehead S."/>
            <person name="Woodward J.R."/>
            <person name="Volckaert G."/>
            <person name="Aert R."/>
            <person name="Robben J."/>
            <person name="Grymonprez B."/>
            <person name="Weltjens I."/>
            <person name="Vanstreels E."/>
            <person name="Rieger M."/>
            <person name="Schaefer M."/>
            <person name="Mueller-Auer S."/>
            <person name="Gabel C."/>
            <person name="Fuchs M."/>
            <person name="Duesterhoeft A."/>
            <person name="Fritzc C."/>
            <person name="Holzer E."/>
            <person name="Moestl D."/>
            <person name="Hilbert H."/>
            <person name="Borzym K."/>
            <person name="Langer I."/>
            <person name="Beck A."/>
            <person name="Lehrach H."/>
            <person name="Reinhardt R."/>
            <person name="Pohl T.M."/>
            <person name="Eger P."/>
            <person name="Zimmermann W."/>
            <person name="Wedler H."/>
            <person name="Wambutt R."/>
            <person name="Purnelle B."/>
            <person name="Goffeau A."/>
            <person name="Cadieu E."/>
            <person name="Dreano S."/>
            <person name="Gloux S."/>
            <person name="Lelaure V."/>
            <person name="Mottier S."/>
            <person name="Galibert F."/>
            <person name="Aves S.J."/>
            <person name="Xiang Z."/>
            <person name="Hunt C."/>
            <person name="Moore K."/>
            <person name="Hurst S.M."/>
            <person name="Lucas M."/>
            <person name="Rochet M."/>
            <person name="Gaillardin C."/>
            <person name="Tallada V.A."/>
            <person name="Garzon A."/>
            <person name="Thode G."/>
            <person name="Daga R.R."/>
            <person name="Cruzado L."/>
            <person name="Jimenez J."/>
            <person name="Sanchez M."/>
            <person name="del Rey F."/>
            <person name="Benito J."/>
            <person name="Dominguez A."/>
            <person name="Revuelta J.L."/>
            <person name="Moreno S."/>
            <person name="Armstrong J."/>
            <person name="Forsburg S.L."/>
            <person name="Cerutti L."/>
            <person name="Lowe T."/>
            <person name="McCombie W.R."/>
            <person name="Paulsen I."/>
            <person name="Potashkin J."/>
            <person name="Shpakovski G.V."/>
            <person name="Ussery D."/>
            <person name="Barrell B.G."/>
            <person name="Nurse P."/>
        </authorList>
    </citation>
    <scope>NUCLEOTIDE SEQUENCE [LARGE SCALE GENOMIC DNA]</scope>
    <source>
        <strain>972 / ATCC 24843</strain>
    </source>
</reference>
<sequence>MAHEIEIDSEADLGRTTFEAEDLYKQRTPITKPPAPRLQSRRASMQETPWTIKDSFNVETKDVVQRCIHTLIPTVNFFDVVDDRPDLYGPFWITTTVIQALFFSNSITEYARYATGHGTSGYSIKKLISAASIIYGYTTIIAVLLWGILVWNKCNPKLLDCLCLYGYANIVWLPVSLATPPFGLLSTLASHIVKYVLTGIGLLISIVFLTRNLYPICQQAGSNLCKLLLFGIIVFHCLLALSLQLIFFS</sequence>